<organism>
    <name type="scientific">Salmonella schwarzengrund (strain CVM19633)</name>
    <dbReference type="NCBI Taxonomy" id="439843"/>
    <lineage>
        <taxon>Bacteria</taxon>
        <taxon>Pseudomonadati</taxon>
        <taxon>Pseudomonadota</taxon>
        <taxon>Gammaproteobacteria</taxon>
        <taxon>Enterobacterales</taxon>
        <taxon>Enterobacteriaceae</taxon>
        <taxon>Salmonella</taxon>
    </lineage>
</organism>
<dbReference type="EC" id="2.3.3.13" evidence="1"/>
<dbReference type="EMBL" id="CP001127">
    <property type="protein sequence ID" value="ACF91724.1"/>
    <property type="molecule type" value="Genomic_DNA"/>
</dbReference>
<dbReference type="RefSeq" id="WP_000082819.1">
    <property type="nucleotide sequence ID" value="NC_011094.1"/>
</dbReference>
<dbReference type="SMR" id="B4TWW1"/>
<dbReference type="KEGG" id="sew:SeSA_A0129"/>
<dbReference type="HOGENOM" id="CLU_022158_0_1_6"/>
<dbReference type="UniPathway" id="UPA00048">
    <property type="reaction ID" value="UER00070"/>
</dbReference>
<dbReference type="Proteomes" id="UP000001865">
    <property type="component" value="Chromosome"/>
</dbReference>
<dbReference type="GO" id="GO:0005829">
    <property type="term" value="C:cytosol"/>
    <property type="evidence" value="ECO:0007669"/>
    <property type="project" value="TreeGrafter"/>
</dbReference>
<dbReference type="GO" id="GO:0003852">
    <property type="term" value="F:2-isopropylmalate synthase activity"/>
    <property type="evidence" value="ECO:0007669"/>
    <property type="project" value="UniProtKB-UniRule"/>
</dbReference>
<dbReference type="GO" id="GO:0003985">
    <property type="term" value="F:acetyl-CoA C-acetyltransferase activity"/>
    <property type="evidence" value="ECO:0007669"/>
    <property type="project" value="UniProtKB-UniRule"/>
</dbReference>
<dbReference type="GO" id="GO:0030145">
    <property type="term" value="F:manganese ion binding"/>
    <property type="evidence" value="ECO:0007669"/>
    <property type="project" value="UniProtKB-UniRule"/>
</dbReference>
<dbReference type="GO" id="GO:0009098">
    <property type="term" value="P:L-leucine biosynthetic process"/>
    <property type="evidence" value="ECO:0007669"/>
    <property type="project" value="UniProtKB-UniRule"/>
</dbReference>
<dbReference type="CDD" id="cd07940">
    <property type="entry name" value="DRE_TIM_IPMS"/>
    <property type="match status" value="1"/>
</dbReference>
<dbReference type="FunFam" id="1.10.238.260:FF:000001">
    <property type="entry name" value="2-isopropylmalate synthase"/>
    <property type="match status" value="1"/>
</dbReference>
<dbReference type="FunFam" id="3.20.20.70:FF:000010">
    <property type="entry name" value="2-isopropylmalate synthase"/>
    <property type="match status" value="1"/>
</dbReference>
<dbReference type="FunFam" id="3.30.160.270:FF:000001">
    <property type="entry name" value="2-isopropylmalate synthase"/>
    <property type="match status" value="1"/>
</dbReference>
<dbReference type="Gene3D" id="1.10.238.260">
    <property type="match status" value="1"/>
</dbReference>
<dbReference type="Gene3D" id="3.30.160.270">
    <property type="match status" value="1"/>
</dbReference>
<dbReference type="Gene3D" id="3.20.20.70">
    <property type="entry name" value="Aldolase class I"/>
    <property type="match status" value="1"/>
</dbReference>
<dbReference type="HAMAP" id="MF_01025">
    <property type="entry name" value="LeuA_type1"/>
    <property type="match status" value="1"/>
</dbReference>
<dbReference type="InterPro" id="IPR050073">
    <property type="entry name" value="2-IPM_HCS-like"/>
</dbReference>
<dbReference type="InterPro" id="IPR013709">
    <property type="entry name" value="2-isopropylmalate_synth_dimer"/>
</dbReference>
<dbReference type="InterPro" id="IPR002034">
    <property type="entry name" value="AIPM/Hcit_synth_CS"/>
</dbReference>
<dbReference type="InterPro" id="IPR013785">
    <property type="entry name" value="Aldolase_TIM"/>
</dbReference>
<dbReference type="InterPro" id="IPR054691">
    <property type="entry name" value="LeuA/HCS_post-cat"/>
</dbReference>
<dbReference type="InterPro" id="IPR036230">
    <property type="entry name" value="LeuA_allosteric_dom_sf"/>
</dbReference>
<dbReference type="InterPro" id="IPR005671">
    <property type="entry name" value="LeuA_bact_synth"/>
</dbReference>
<dbReference type="InterPro" id="IPR000891">
    <property type="entry name" value="PYR_CT"/>
</dbReference>
<dbReference type="NCBIfam" id="TIGR00973">
    <property type="entry name" value="leuA_bact"/>
    <property type="match status" value="1"/>
</dbReference>
<dbReference type="NCBIfam" id="NF002084">
    <property type="entry name" value="PRK00915.1-1"/>
    <property type="match status" value="1"/>
</dbReference>
<dbReference type="NCBIfam" id="NF002086">
    <property type="entry name" value="PRK00915.1-3"/>
    <property type="match status" value="1"/>
</dbReference>
<dbReference type="PANTHER" id="PTHR10277:SF9">
    <property type="entry name" value="2-ISOPROPYLMALATE SYNTHASE 1, CHLOROPLASTIC-RELATED"/>
    <property type="match status" value="1"/>
</dbReference>
<dbReference type="PANTHER" id="PTHR10277">
    <property type="entry name" value="HOMOCITRATE SYNTHASE-RELATED"/>
    <property type="match status" value="1"/>
</dbReference>
<dbReference type="Pfam" id="PF22617">
    <property type="entry name" value="HCS_D2"/>
    <property type="match status" value="1"/>
</dbReference>
<dbReference type="Pfam" id="PF00682">
    <property type="entry name" value="HMGL-like"/>
    <property type="match status" value="1"/>
</dbReference>
<dbReference type="Pfam" id="PF08502">
    <property type="entry name" value="LeuA_dimer"/>
    <property type="match status" value="1"/>
</dbReference>
<dbReference type="SMART" id="SM00917">
    <property type="entry name" value="LeuA_dimer"/>
    <property type="match status" value="1"/>
</dbReference>
<dbReference type="SUPFAM" id="SSF110921">
    <property type="entry name" value="2-isopropylmalate synthase LeuA, allosteric (dimerisation) domain"/>
    <property type="match status" value="1"/>
</dbReference>
<dbReference type="SUPFAM" id="SSF51569">
    <property type="entry name" value="Aldolase"/>
    <property type="match status" value="1"/>
</dbReference>
<dbReference type="PROSITE" id="PS00815">
    <property type="entry name" value="AIPM_HOMOCIT_SYNTH_1"/>
    <property type="match status" value="1"/>
</dbReference>
<dbReference type="PROSITE" id="PS00816">
    <property type="entry name" value="AIPM_HOMOCIT_SYNTH_2"/>
    <property type="match status" value="1"/>
</dbReference>
<dbReference type="PROSITE" id="PS50991">
    <property type="entry name" value="PYR_CT"/>
    <property type="match status" value="1"/>
</dbReference>
<accession>B4TWW1</accession>
<name>LEU1_SALSV</name>
<comment type="function">
    <text evidence="1">Catalyzes the condensation of the acetyl group of acetyl-CoA with 3-methyl-2-oxobutanoate (2-ketoisovalerate) to form 3-carboxy-3-hydroxy-4-methylpentanoate (2-isopropylmalate).</text>
</comment>
<comment type="catalytic activity">
    <reaction evidence="1">
        <text>3-methyl-2-oxobutanoate + acetyl-CoA + H2O = (2S)-2-isopropylmalate + CoA + H(+)</text>
        <dbReference type="Rhea" id="RHEA:21524"/>
        <dbReference type="ChEBI" id="CHEBI:1178"/>
        <dbReference type="ChEBI" id="CHEBI:11851"/>
        <dbReference type="ChEBI" id="CHEBI:15377"/>
        <dbReference type="ChEBI" id="CHEBI:15378"/>
        <dbReference type="ChEBI" id="CHEBI:57287"/>
        <dbReference type="ChEBI" id="CHEBI:57288"/>
        <dbReference type="EC" id="2.3.3.13"/>
    </reaction>
</comment>
<comment type="cofactor">
    <cofactor evidence="1">
        <name>Mn(2+)</name>
        <dbReference type="ChEBI" id="CHEBI:29035"/>
    </cofactor>
</comment>
<comment type="pathway">
    <text evidence="1">Amino-acid biosynthesis; L-leucine biosynthesis; L-leucine from 3-methyl-2-oxobutanoate: step 1/4.</text>
</comment>
<comment type="subunit">
    <text evidence="1">Homodimer.</text>
</comment>
<comment type="subcellular location">
    <subcellularLocation>
        <location evidence="1">Cytoplasm</location>
    </subcellularLocation>
</comment>
<comment type="similarity">
    <text evidence="1">Belongs to the alpha-IPM synthase/homocitrate synthase family. LeuA type 1 subfamily.</text>
</comment>
<feature type="chain" id="PRO_1000149275" description="2-isopropylmalate synthase">
    <location>
        <begin position="1"/>
        <end position="523"/>
    </location>
</feature>
<feature type="domain" description="Pyruvate carboxyltransferase" evidence="1">
    <location>
        <begin position="5"/>
        <end position="267"/>
    </location>
</feature>
<feature type="region of interest" description="Regulatory domain" evidence="1">
    <location>
        <begin position="392"/>
        <end position="523"/>
    </location>
</feature>
<feature type="binding site" evidence="1">
    <location>
        <position position="14"/>
    </location>
    <ligand>
        <name>Mn(2+)</name>
        <dbReference type="ChEBI" id="CHEBI:29035"/>
    </ligand>
</feature>
<feature type="binding site" evidence="1">
    <location>
        <position position="202"/>
    </location>
    <ligand>
        <name>Mn(2+)</name>
        <dbReference type="ChEBI" id="CHEBI:29035"/>
    </ligand>
</feature>
<feature type="binding site" evidence="1">
    <location>
        <position position="204"/>
    </location>
    <ligand>
        <name>Mn(2+)</name>
        <dbReference type="ChEBI" id="CHEBI:29035"/>
    </ligand>
</feature>
<feature type="binding site" evidence="1">
    <location>
        <position position="238"/>
    </location>
    <ligand>
        <name>Mn(2+)</name>
        <dbReference type="ChEBI" id="CHEBI:29035"/>
    </ligand>
</feature>
<reference key="1">
    <citation type="journal article" date="2011" name="J. Bacteriol.">
        <title>Comparative genomics of 28 Salmonella enterica isolates: evidence for CRISPR-mediated adaptive sublineage evolution.</title>
        <authorList>
            <person name="Fricke W.F."/>
            <person name="Mammel M.K."/>
            <person name="McDermott P.F."/>
            <person name="Tartera C."/>
            <person name="White D.G."/>
            <person name="Leclerc J.E."/>
            <person name="Ravel J."/>
            <person name="Cebula T.A."/>
        </authorList>
    </citation>
    <scope>NUCLEOTIDE SEQUENCE [LARGE SCALE GENOMIC DNA]</scope>
    <source>
        <strain>CVM19633</strain>
    </source>
</reference>
<evidence type="ECO:0000255" key="1">
    <source>
        <dbReference type="HAMAP-Rule" id="MF_01025"/>
    </source>
</evidence>
<sequence length="523" mass="57431">MSQQVIIFDTTLRDGEQALQASLSAKEKLQIALALERMGVDVMEVGFPVSSPGDFESVQTIARTIKNSRVCALARCVEKDIDVAAQALKVADAFRIHTFIATSPMHIATKLRSTLDEVIERAVYMVKRARNYTDDVEFSCEDAGRTPVDDLARVVEAAINAGARTINIPDTVGYTMPFEFAGIISGLYERVPNIDKAIISVHTHDDLGIAVGNSLAAVHAGARQVEGAMNGIGERAGNCALEEVIMAIKVRKDIMNVHTNINHHEIWRTSQTVSQICNMPIPANKAIVGSGAFAHSSGIHQDGVLKNRENYEIMTPESIGLNQIQLNLTSRSGRAAVKHRMEEMGYKDTDYNMDHLYDAFLKLADKKGQVFDYDLEALAFINKQQEEPEHFRLDYFSVQSGSSDIATASVKLACGEEIKAEAANGNGPVDAIYQAINRITGYDVELVKYDLNAKGQGKDALGQVDIVVNHHGRRFHGVGLATDIVESSAKAMVHVLNNIWRAAEVEKELQRKAQNKENNKETV</sequence>
<proteinExistence type="inferred from homology"/>
<keyword id="KW-0028">Amino-acid biosynthesis</keyword>
<keyword id="KW-0100">Branched-chain amino acid biosynthesis</keyword>
<keyword id="KW-0963">Cytoplasm</keyword>
<keyword id="KW-0432">Leucine biosynthesis</keyword>
<keyword id="KW-0464">Manganese</keyword>
<keyword id="KW-0479">Metal-binding</keyword>
<keyword id="KW-0808">Transferase</keyword>
<protein>
    <recommendedName>
        <fullName evidence="1">2-isopropylmalate synthase</fullName>
        <ecNumber evidence="1">2.3.3.13</ecNumber>
    </recommendedName>
    <alternativeName>
        <fullName evidence="1">Alpha-IPM synthase</fullName>
    </alternativeName>
    <alternativeName>
        <fullName evidence="1">Alpha-isopropylmalate synthase</fullName>
    </alternativeName>
</protein>
<gene>
    <name evidence="1" type="primary">leuA</name>
    <name type="ordered locus">SeSA_A0129</name>
</gene>